<proteinExistence type="inferred from homology"/>
<keyword id="KW-0067">ATP-binding</keyword>
<keyword id="KW-0963">Cytoplasm</keyword>
<keyword id="KW-0547">Nucleotide-binding</keyword>
<keyword id="KW-1185">Reference proteome</keyword>
<keyword id="KW-0694">RNA-binding</keyword>
<keyword id="KW-0784">Thiamine biosynthesis</keyword>
<keyword id="KW-0808">Transferase</keyword>
<keyword id="KW-0820">tRNA-binding</keyword>
<gene>
    <name evidence="1" type="primary">thiI</name>
    <name type="ordered locus">SAG1372</name>
</gene>
<reference key="1">
    <citation type="journal article" date="2002" name="Proc. Natl. Acad. Sci. U.S.A.">
        <title>Complete genome sequence and comparative genomic analysis of an emerging human pathogen, serotype V Streptococcus agalactiae.</title>
        <authorList>
            <person name="Tettelin H."/>
            <person name="Masignani V."/>
            <person name="Cieslewicz M.J."/>
            <person name="Eisen J.A."/>
            <person name="Peterson S.N."/>
            <person name="Wessels M.R."/>
            <person name="Paulsen I.T."/>
            <person name="Nelson K.E."/>
            <person name="Margarit I."/>
            <person name="Read T.D."/>
            <person name="Madoff L.C."/>
            <person name="Wolf A.M."/>
            <person name="Beanan M.J."/>
            <person name="Brinkac L.M."/>
            <person name="Daugherty S.C."/>
            <person name="DeBoy R.T."/>
            <person name="Durkin A.S."/>
            <person name="Kolonay J.F."/>
            <person name="Madupu R."/>
            <person name="Lewis M.R."/>
            <person name="Radune D."/>
            <person name="Fedorova N.B."/>
            <person name="Scanlan D."/>
            <person name="Khouri H.M."/>
            <person name="Mulligan S."/>
            <person name="Carty H.A."/>
            <person name="Cline R.T."/>
            <person name="Van Aken S.E."/>
            <person name="Gill J."/>
            <person name="Scarselli M."/>
            <person name="Mora M."/>
            <person name="Iacobini E.T."/>
            <person name="Brettoni C."/>
            <person name="Galli G."/>
            <person name="Mariani M."/>
            <person name="Vegni F."/>
            <person name="Maione D."/>
            <person name="Rinaudo D."/>
            <person name="Rappuoli R."/>
            <person name="Telford J.L."/>
            <person name="Kasper D.L."/>
            <person name="Grandi G."/>
            <person name="Fraser C.M."/>
        </authorList>
    </citation>
    <scope>NUCLEOTIDE SEQUENCE [LARGE SCALE GENOMIC DNA]</scope>
    <source>
        <strain>ATCC BAA-611 / 2603 V/R</strain>
    </source>
</reference>
<evidence type="ECO:0000255" key="1">
    <source>
        <dbReference type="HAMAP-Rule" id="MF_00021"/>
    </source>
</evidence>
<comment type="function">
    <text evidence="1">Catalyzes the ATP-dependent transfer of a sulfur to tRNA to produce 4-thiouridine in position 8 of tRNAs, which functions as a near-UV photosensor. Also catalyzes the transfer of sulfur to the sulfur carrier protein ThiS, forming ThiS-thiocarboxylate. This is a step in the synthesis of thiazole, in the thiamine biosynthesis pathway. The sulfur is donated as persulfide by IscS.</text>
</comment>
<comment type="catalytic activity">
    <reaction evidence="1">
        <text>[ThiI sulfur-carrier protein]-S-sulfanyl-L-cysteine + a uridine in tRNA + 2 reduced [2Fe-2S]-[ferredoxin] + ATP + H(+) = [ThiI sulfur-carrier protein]-L-cysteine + a 4-thiouridine in tRNA + 2 oxidized [2Fe-2S]-[ferredoxin] + AMP + diphosphate</text>
        <dbReference type="Rhea" id="RHEA:24176"/>
        <dbReference type="Rhea" id="RHEA-COMP:10000"/>
        <dbReference type="Rhea" id="RHEA-COMP:10001"/>
        <dbReference type="Rhea" id="RHEA-COMP:13337"/>
        <dbReference type="Rhea" id="RHEA-COMP:13338"/>
        <dbReference type="Rhea" id="RHEA-COMP:13339"/>
        <dbReference type="Rhea" id="RHEA-COMP:13340"/>
        <dbReference type="ChEBI" id="CHEBI:15378"/>
        <dbReference type="ChEBI" id="CHEBI:29950"/>
        <dbReference type="ChEBI" id="CHEBI:30616"/>
        <dbReference type="ChEBI" id="CHEBI:33019"/>
        <dbReference type="ChEBI" id="CHEBI:33737"/>
        <dbReference type="ChEBI" id="CHEBI:33738"/>
        <dbReference type="ChEBI" id="CHEBI:61963"/>
        <dbReference type="ChEBI" id="CHEBI:65315"/>
        <dbReference type="ChEBI" id="CHEBI:136798"/>
        <dbReference type="ChEBI" id="CHEBI:456215"/>
        <dbReference type="EC" id="2.8.1.4"/>
    </reaction>
</comment>
<comment type="catalytic activity">
    <reaction evidence="1">
        <text>[ThiS sulfur-carrier protein]-C-terminal Gly-Gly-AMP + S-sulfanyl-L-cysteinyl-[cysteine desulfurase] + AH2 = [ThiS sulfur-carrier protein]-C-terminal-Gly-aminoethanethioate + L-cysteinyl-[cysteine desulfurase] + A + AMP + 2 H(+)</text>
        <dbReference type="Rhea" id="RHEA:43340"/>
        <dbReference type="Rhea" id="RHEA-COMP:12157"/>
        <dbReference type="Rhea" id="RHEA-COMP:12158"/>
        <dbReference type="Rhea" id="RHEA-COMP:12910"/>
        <dbReference type="Rhea" id="RHEA-COMP:19908"/>
        <dbReference type="ChEBI" id="CHEBI:13193"/>
        <dbReference type="ChEBI" id="CHEBI:15378"/>
        <dbReference type="ChEBI" id="CHEBI:17499"/>
        <dbReference type="ChEBI" id="CHEBI:29950"/>
        <dbReference type="ChEBI" id="CHEBI:61963"/>
        <dbReference type="ChEBI" id="CHEBI:90618"/>
        <dbReference type="ChEBI" id="CHEBI:232372"/>
        <dbReference type="ChEBI" id="CHEBI:456215"/>
    </reaction>
</comment>
<comment type="pathway">
    <text evidence="1">Cofactor biosynthesis; thiamine diphosphate biosynthesis.</text>
</comment>
<comment type="subcellular location">
    <subcellularLocation>
        <location evidence="1">Cytoplasm</location>
    </subcellularLocation>
</comment>
<comment type="similarity">
    <text evidence="1">Belongs to the ThiI family.</text>
</comment>
<protein>
    <recommendedName>
        <fullName evidence="1">Probable tRNA sulfurtransferase</fullName>
        <ecNumber evidence="1">2.8.1.4</ecNumber>
    </recommendedName>
    <alternativeName>
        <fullName evidence="1">Sulfur carrier protein ThiS sulfurtransferase</fullName>
    </alternativeName>
    <alternativeName>
        <fullName evidence="1">Thiamine biosynthesis protein ThiI</fullName>
    </alternativeName>
    <alternativeName>
        <fullName evidence="1">tRNA 4-thiouridine synthase</fullName>
    </alternativeName>
</protein>
<dbReference type="EC" id="2.8.1.4" evidence="1"/>
<dbReference type="EMBL" id="AE009948">
    <property type="protein sequence ID" value="AAN00243.1"/>
    <property type="molecule type" value="Genomic_DNA"/>
</dbReference>
<dbReference type="RefSeq" id="NP_688370.1">
    <property type="nucleotide sequence ID" value="NC_004116.1"/>
</dbReference>
<dbReference type="RefSeq" id="WP_001200105.1">
    <property type="nucleotide sequence ID" value="NC_004116.1"/>
</dbReference>
<dbReference type="SMR" id="Q8DYV1"/>
<dbReference type="STRING" id="208435.SAG1372"/>
<dbReference type="KEGG" id="sag:SAG1372"/>
<dbReference type="PATRIC" id="fig|208435.3.peg.1380"/>
<dbReference type="HOGENOM" id="CLU_037952_4_0_9"/>
<dbReference type="OrthoDB" id="9773948at2"/>
<dbReference type="UniPathway" id="UPA00060"/>
<dbReference type="Proteomes" id="UP000000821">
    <property type="component" value="Chromosome"/>
</dbReference>
<dbReference type="GO" id="GO:0005829">
    <property type="term" value="C:cytosol"/>
    <property type="evidence" value="ECO:0007669"/>
    <property type="project" value="TreeGrafter"/>
</dbReference>
<dbReference type="GO" id="GO:0005524">
    <property type="term" value="F:ATP binding"/>
    <property type="evidence" value="ECO:0007669"/>
    <property type="project" value="UniProtKB-UniRule"/>
</dbReference>
<dbReference type="GO" id="GO:0004810">
    <property type="term" value="F:CCA tRNA nucleotidyltransferase activity"/>
    <property type="evidence" value="ECO:0007669"/>
    <property type="project" value="InterPro"/>
</dbReference>
<dbReference type="GO" id="GO:0000049">
    <property type="term" value="F:tRNA binding"/>
    <property type="evidence" value="ECO:0007669"/>
    <property type="project" value="UniProtKB-UniRule"/>
</dbReference>
<dbReference type="GO" id="GO:0140741">
    <property type="term" value="F:tRNA-uracil-4 sulfurtransferase activity"/>
    <property type="evidence" value="ECO:0007669"/>
    <property type="project" value="UniProtKB-EC"/>
</dbReference>
<dbReference type="GO" id="GO:0009228">
    <property type="term" value="P:thiamine biosynthetic process"/>
    <property type="evidence" value="ECO:0007669"/>
    <property type="project" value="UniProtKB-KW"/>
</dbReference>
<dbReference type="GO" id="GO:0009229">
    <property type="term" value="P:thiamine diphosphate biosynthetic process"/>
    <property type="evidence" value="ECO:0007669"/>
    <property type="project" value="UniProtKB-UniRule"/>
</dbReference>
<dbReference type="GO" id="GO:0052837">
    <property type="term" value="P:thiazole biosynthetic process"/>
    <property type="evidence" value="ECO:0007669"/>
    <property type="project" value="TreeGrafter"/>
</dbReference>
<dbReference type="GO" id="GO:0002937">
    <property type="term" value="P:tRNA 4-thiouridine biosynthesis"/>
    <property type="evidence" value="ECO:0007669"/>
    <property type="project" value="TreeGrafter"/>
</dbReference>
<dbReference type="CDD" id="cd01712">
    <property type="entry name" value="PPase_ThiI"/>
    <property type="match status" value="1"/>
</dbReference>
<dbReference type="CDD" id="cd11716">
    <property type="entry name" value="THUMP_ThiI"/>
    <property type="match status" value="1"/>
</dbReference>
<dbReference type="FunFam" id="3.40.50.620:FF:000053">
    <property type="entry name" value="Probable tRNA sulfurtransferase"/>
    <property type="match status" value="1"/>
</dbReference>
<dbReference type="Gene3D" id="3.30.2130.30">
    <property type="match status" value="1"/>
</dbReference>
<dbReference type="Gene3D" id="3.40.50.620">
    <property type="entry name" value="HUPs"/>
    <property type="match status" value="1"/>
</dbReference>
<dbReference type="HAMAP" id="MF_00021">
    <property type="entry name" value="ThiI"/>
    <property type="match status" value="1"/>
</dbReference>
<dbReference type="InterPro" id="IPR014729">
    <property type="entry name" value="Rossmann-like_a/b/a_fold"/>
</dbReference>
<dbReference type="InterPro" id="IPR020536">
    <property type="entry name" value="ThiI_AANH"/>
</dbReference>
<dbReference type="InterPro" id="IPR054173">
    <property type="entry name" value="ThiI_fer"/>
</dbReference>
<dbReference type="InterPro" id="IPR049961">
    <property type="entry name" value="ThiI_N"/>
</dbReference>
<dbReference type="InterPro" id="IPR004114">
    <property type="entry name" value="THUMP_dom"/>
</dbReference>
<dbReference type="InterPro" id="IPR049962">
    <property type="entry name" value="THUMP_ThiI"/>
</dbReference>
<dbReference type="InterPro" id="IPR003720">
    <property type="entry name" value="tRNA_STrfase"/>
</dbReference>
<dbReference type="InterPro" id="IPR050102">
    <property type="entry name" value="tRNA_sulfurtransferase_ThiI"/>
</dbReference>
<dbReference type="NCBIfam" id="TIGR00342">
    <property type="entry name" value="tRNA uracil 4-sulfurtransferase ThiI"/>
    <property type="match status" value="1"/>
</dbReference>
<dbReference type="PANTHER" id="PTHR43209">
    <property type="entry name" value="TRNA SULFURTRANSFERASE"/>
    <property type="match status" value="1"/>
</dbReference>
<dbReference type="PANTHER" id="PTHR43209:SF1">
    <property type="entry name" value="TRNA SULFURTRANSFERASE"/>
    <property type="match status" value="1"/>
</dbReference>
<dbReference type="Pfam" id="PF02568">
    <property type="entry name" value="ThiI"/>
    <property type="match status" value="1"/>
</dbReference>
<dbReference type="Pfam" id="PF22025">
    <property type="entry name" value="ThiI_fer"/>
    <property type="match status" value="1"/>
</dbReference>
<dbReference type="Pfam" id="PF02926">
    <property type="entry name" value="THUMP"/>
    <property type="match status" value="1"/>
</dbReference>
<dbReference type="SMART" id="SM00981">
    <property type="entry name" value="THUMP"/>
    <property type="match status" value="1"/>
</dbReference>
<dbReference type="SUPFAM" id="SSF52402">
    <property type="entry name" value="Adenine nucleotide alpha hydrolases-like"/>
    <property type="match status" value="1"/>
</dbReference>
<dbReference type="SUPFAM" id="SSF143437">
    <property type="entry name" value="THUMP domain-like"/>
    <property type="match status" value="1"/>
</dbReference>
<dbReference type="PROSITE" id="PS51165">
    <property type="entry name" value="THUMP"/>
    <property type="match status" value="1"/>
</dbReference>
<organism>
    <name type="scientific">Streptococcus agalactiae serotype V (strain ATCC BAA-611 / 2603 V/R)</name>
    <dbReference type="NCBI Taxonomy" id="208435"/>
    <lineage>
        <taxon>Bacteria</taxon>
        <taxon>Bacillati</taxon>
        <taxon>Bacillota</taxon>
        <taxon>Bacilli</taxon>
        <taxon>Lactobacillales</taxon>
        <taxon>Streptococcaceae</taxon>
        <taxon>Streptococcus</taxon>
    </lineage>
</organism>
<accession>Q8DYV1</accession>
<feature type="chain" id="PRO_0000154872" description="Probable tRNA sulfurtransferase">
    <location>
        <begin position="1"/>
        <end position="404"/>
    </location>
</feature>
<feature type="domain" description="THUMP" evidence="1">
    <location>
        <begin position="60"/>
        <end position="165"/>
    </location>
</feature>
<feature type="binding site" evidence="1">
    <location>
        <begin position="183"/>
        <end position="184"/>
    </location>
    <ligand>
        <name>ATP</name>
        <dbReference type="ChEBI" id="CHEBI:30616"/>
    </ligand>
</feature>
<feature type="binding site" evidence="1">
    <location>
        <begin position="208"/>
        <end position="209"/>
    </location>
    <ligand>
        <name>ATP</name>
        <dbReference type="ChEBI" id="CHEBI:30616"/>
    </ligand>
</feature>
<feature type="binding site" evidence="1">
    <location>
        <position position="265"/>
    </location>
    <ligand>
        <name>ATP</name>
        <dbReference type="ChEBI" id="CHEBI:30616"/>
    </ligand>
</feature>
<feature type="binding site" evidence="1">
    <location>
        <position position="287"/>
    </location>
    <ligand>
        <name>ATP</name>
        <dbReference type="ChEBI" id="CHEBI:30616"/>
    </ligand>
</feature>
<feature type="binding site" evidence="1">
    <location>
        <position position="296"/>
    </location>
    <ligand>
        <name>ATP</name>
        <dbReference type="ChEBI" id="CHEBI:30616"/>
    </ligand>
</feature>
<sequence length="404" mass="45245">MQYSEIMIRYGELSTKKKNRMRFINKLKNNMEHVLSIYPDVSVKTDRDRGHVYLNGTDYHEVAESLKEIFGIQAFSPSFKVEKNVDTLVKAVQEIMTSVYKDGMTFKITAKRSDHSFELDSRALNHTLGDAVFSVLPNIKAQMKQPDINLKVEIRDEAAYISYEDIRGAGGLPVGTSGKGMLMLSGGIDSPVAGYLALKRGVDIEAVHFASPPYTSPGALKKAHDLTRKLTKFGGNIQFIEVPFTEIQEEIKAKAPEAYLMTLTRRFMMRITDRIREDRNGLVIINGESLGQVASQTLESMQAINAVTATPIIRPVVTMDKLEIIDIAQKIDTFDISIQPFEDCCTIFAPDRPKTNPKIKNTEQYEKRMDVEGLVERAVAGIMVTTIQPQADSDDVDDLIDDLL</sequence>
<name>THII_STRA5</name>